<proteinExistence type="inferred from homology"/>
<sequence>MILRAVVQRVSRARVTVGGEVVGQIGPGYVVLLGVSREDDEAAADYLAEKVAGLRVFEDEEGKMNRSIQEAGGAVLAVSQFTLYGDVRRGRRPGFDRAARPEQAEPLYRRFVERLRALGLHVETGRFQTHMEVELVNDGPVTILIDSEKTF</sequence>
<comment type="function">
    <text evidence="1">An aminoacyl-tRNA editing enzyme that deacylates mischarged D-aminoacyl-tRNAs. Also deacylates mischarged glycyl-tRNA(Ala), protecting cells against glycine mischarging by AlaRS. Acts via tRNA-based rather than protein-based catalysis; rejects L-amino acids rather than detecting D-amino acids in the active site. By recycling D-aminoacyl-tRNA to D-amino acids and free tRNA molecules, this enzyme counteracts the toxicity associated with the formation of D-aminoacyl-tRNA entities in vivo and helps enforce protein L-homochirality.</text>
</comment>
<comment type="catalytic activity">
    <reaction evidence="1">
        <text>glycyl-tRNA(Ala) + H2O = tRNA(Ala) + glycine + H(+)</text>
        <dbReference type="Rhea" id="RHEA:53744"/>
        <dbReference type="Rhea" id="RHEA-COMP:9657"/>
        <dbReference type="Rhea" id="RHEA-COMP:13640"/>
        <dbReference type="ChEBI" id="CHEBI:15377"/>
        <dbReference type="ChEBI" id="CHEBI:15378"/>
        <dbReference type="ChEBI" id="CHEBI:57305"/>
        <dbReference type="ChEBI" id="CHEBI:78442"/>
        <dbReference type="ChEBI" id="CHEBI:78522"/>
        <dbReference type="EC" id="3.1.1.96"/>
    </reaction>
</comment>
<comment type="catalytic activity">
    <reaction evidence="1">
        <text>a D-aminoacyl-tRNA + H2O = a tRNA + a D-alpha-amino acid + H(+)</text>
        <dbReference type="Rhea" id="RHEA:13953"/>
        <dbReference type="Rhea" id="RHEA-COMP:10123"/>
        <dbReference type="Rhea" id="RHEA-COMP:10124"/>
        <dbReference type="ChEBI" id="CHEBI:15377"/>
        <dbReference type="ChEBI" id="CHEBI:15378"/>
        <dbReference type="ChEBI" id="CHEBI:59871"/>
        <dbReference type="ChEBI" id="CHEBI:78442"/>
        <dbReference type="ChEBI" id="CHEBI:79333"/>
        <dbReference type="EC" id="3.1.1.96"/>
    </reaction>
</comment>
<comment type="subunit">
    <text evidence="1">Homodimer.</text>
</comment>
<comment type="subcellular location">
    <subcellularLocation>
        <location evidence="1">Cytoplasm</location>
    </subcellularLocation>
</comment>
<comment type="domain">
    <text evidence="1">A Gly-cisPro motif from one monomer fits into the active site of the other monomer to allow specific chiral rejection of L-amino acids.</text>
</comment>
<comment type="similarity">
    <text evidence="1">Belongs to the DTD family.</text>
</comment>
<organism>
    <name type="scientific">Symbiobacterium thermophilum (strain DSM 24528 / JCM 14929 / IAM 14863 / T)</name>
    <dbReference type="NCBI Taxonomy" id="292459"/>
    <lineage>
        <taxon>Bacteria</taxon>
        <taxon>Bacillati</taxon>
        <taxon>Bacillota</taxon>
        <taxon>Clostridia</taxon>
        <taxon>Eubacteriales</taxon>
        <taxon>Symbiobacteriaceae</taxon>
        <taxon>Symbiobacterium</taxon>
    </lineage>
</organism>
<accession>Q67LN1</accession>
<dbReference type="EC" id="3.1.1.96" evidence="1"/>
<dbReference type="EMBL" id="AP006840">
    <property type="protein sequence ID" value="BAD41415.1"/>
    <property type="molecule type" value="Genomic_DNA"/>
</dbReference>
<dbReference type="SMR" id="Q67LN1"/>
<dbReference type="STRING" id="292459.STH2430"/>
<dbReference type="KEGG" id="sth:STH2430"/>
<dbReference type="eggNOG" id="COG1490">
    <property type="taxonomic scope" value="Bacteria"/>
</dbReference>
<dbReference type="HOGENOM" id="CLU_076901_1_0_9"/>
<dbReference type="Proteomes" id="UP000000417">
    <property type="component" value="Chromosome"/>
</dbReference>
<dbReference type="GO" id="GO:0005737">
    <property type="term" value="C:cytoplasm"/>
    <property type="evidence" value="ECO:0007669"/>
    <property type="project" value="UniProtKB-SubCell"/>
</dbReference>
<dbReference type="GO" id="GO:0051500">
    <property type="term" value="F:D-tyrosyl-tRNA(Tyr) deacylase activity"/>
    <property type="evidence" value="ECO:0007669"/>
    <property type="project" value="TreeGrafter"/>
</dbReference>
<dbReference type="GO" id="GO:0106026">
    <property type="term" value="F:Gly-tRNA(Ala) deacylase activity"/>
    <property type="evidence" value="ECO:0007669"/>
    <property type="project" value="UniProtKB-UniRule"/>
</dbReference>
<dbReference type="GO" id="GO:0043908">
    <property type="term" value="F:Ser(Gly)-tRNA(Ala) hydrolase activity"/>
    <property type="evidence" value="ECO:0007669"/>
    <property type="project" value="UniProtKB-UniRule"/>
</dbReference>
<dbReference type="GO" id="GO:0000049">
    <property type="term" value="F:tRNA binding"/>
    <property type="evidence" value="ECO:0007669"/>
    <property type="project" value="UniProtKB-UniRule"/>
</dbReference>
<dbReference type="GO" id="GO:0019478">
    <property type="term" value="P:D-amino acid catabolic process"/>
    <property type="evidence" value="ECO:0007669"/>
    <property type="project" value="UniProtKB-UniRule"/>
</dbReference>
<dbReference type="CDD" id="cd00563">
    <property type="entry name" value="Dtyr_deacylase"/>
    <property type="match status" value="1"/>
</dbReference>
<dbReference type="FunFam" id="3.50.80.10:FF:000001">
    <property type="entry name" value="D-aminoacyl-tRNA deacylase"/>
    <property type="match status" value="1"/>
</dbReference>
<dbReference type="Gene3D" id="3.50.80.10">
    <property type="entry name" value="D-tyrosyl-tRNA(Tyr) deacylase"/>
    <property type="match status" value="1"/>
</dbReference>
<dbReference type="HAMAP" id="MF_00518">
    <property type="entry name" value="Deacylase_Dtd"/>
    <property type="match status" value="1"/>
</dbReference>
<dbReference type="InterPro" id="IPR003732">
    <property type="entry name" value="Daa-tRNA_deacyls_DTD"/>
</dbReference>
<dbReference type="InterPro" id="IPR023509">
    <property type="entry name" value="DTD-like_sf"/>
</dbReference>
<dbReference type="NCBIfam" id="TIGR00256">
    <property type="entry name" value="D-aminoacyl-tRNA deacylase"/>
    <property type="match status" value="1"/>
</dbReference>
<dbReference type="PANTHER" id="PTHR10472:SF5">
    <property type="entry name" value="D-AMINOACYL-TRNA DEACYLASE 1"/>
    <property type="match status" value="1"/>
</dbReference>
<dbReference type="PANTHER" id="PTHR10472">
    <property type="entry name" value="D-TYROSYL-TRNA TYR DEACYLASE"/>
    <property type="match status" value="1"/>
</dbReference>
<dbReference type="Pfam" id="PF02580">
    <property type="entry name" value="Tyr_Deacylase"/>
    <property type="match status" value="1"/>
</dbReference>
<dbReference type="SUPFAM" id="SSF69500">
    <property type="entry name" value="DTD-like"/>
    <property type="match status" value="1"/>
</dbReference>
<keyword id="KW-0963">Cytoplasm</keyword>
<keyword id="KW-0378">Hydrolase</keyword>
<keyword id="KW-1185">Reference proteome</keyword>
<keyword id="KW-0694">RNA-binding</keyword>
<keyword id="KW-0820">tRNA-binding</keyword>
<feature type="chain" id="PRO_0000164609" description="D-aminoacyl-tRNA deacylase">
    <location>
        <begin position="1"/>
        <end position="151"/>
    </location>
</feature>
<feature type="short sequence motif" description="Gly-cisPro motif, important for rejection of L-amino acids" evidence="1">
    <location>
        <begin position="139"/>
        <end position="140"/>
    </location>
</feature>
<protein>
    <recommendedName>
        <fullName evidence="1">D-aminoacyl-tRNA deacylase</fullName>
        <shortName evidence="1">DTD</shortName>
        <ecNumber evidence="1">3.1.1.96</ecNumber>
    </recommendedName>
    <alternativeName>
        <fullName evidence="1">Gly-tRNA(Ala) deacylase</fullName>
    </alternativeName>
</protein>
<evidence type="ECO:0000255" key="1">
    <source>
        <dbReference type="HAMAP-Rule" id="MF_00518"/>
    </source>
</evidence>
<reference key="1">
    <citation type="journal article" date="2004" name="Nucleic Acids Res.">
        <title>Genome sequence of Symbiobacterium thermophilum, an uncultivable bacterium that depends on microbial commensalism.</title>
        <authorList>
            <person name="Ueda K."/>
            <person name="Yamashita A."/>
            <person name="Ishikawa J."/>
            <person name="Shimada M."/>
            <person name="Watsuji T."/>
            <person name="Morimura K."/>
            <person name="Ikeda H."/>
            <person name="Hattori M."/>
            <person name="Beppu T."/>
        </authorList>
    </citation>
    <scope>NUCLEOTIDE SEQUENCE [LARGE SCALE GENOMIC DNA]</scope>
    <source>
        <strain>DSM 24528 / JCM 14929 / IAM 14863 / T</strain>
    </source>
</reference>
<name>DTD_SYMTH</name>
<gene>
    <name evidence="1" type="primary">dtd</name>
    <name type="ordered locus">STH2430</name>
</gene>